<proteinExistence type="inferred from homology"/>
<evidence type="ECO:0000255" key="1">
    <source>
        <dbReference type="HAMAP-Rule" id="MF_01307"/>
    </source>
</evidence>
<evidence type="ECO:0000305" key="2"/>
<sequence>MAKEQQQATDLNEKLIAVNRVSKTVKGGRIFSFTALTVVGDGNGRIGFGYGKAREVPAAIQKSMEKARRNMFTIALNEGTLHHAVKGRHTGSKVYMQPASEGTGIIAGGAMRAVLEVVGVRNVLAKAYGSTNPINVVRATILGLTSVKSPEMVAAKRGLTVEAISE</sequence>
<protein>
    <recommendedName>
        <fullName evidence="1">Small ribosomal subunit protein uS5</fullName>
    </recommendedName>
    <alternativeName>
        <fullName evidence="2">30S ribosomal protein S5</fullName>
    </alternativeName>
</protein>
<organism>
    <name type="scientific">Aliivibrio salmonicida (strain LFI1238)</name>
    <name type="common">Vibrio salmonicida (strain LFI1238)</name>
    <dbReference type="NCBI Taxonomy" id="316275"/>
    <lineage>
        <taxon>Bacteria</taxon>
        <taxon>Pseudomonadati</taxon>
        <taxon>Pseudomonadota</taxon>
        <taxon>Gammaproteobacteria</taxon>
        <taxon>Vibrionales</taxon>
        <taxon>Vibrionaceae</taxon>
        <taxon>Aliivibrio</taxon>
    </lineage>
</organism>
<accession>B6EPU2</accession>
<dbReference type="EMBL" id="FM178379">
    <property type="protein sequence ID" value="CAQ78022.1"/>
    <property type="molecule type" value="Genomic_DNA"/>
</dbReference>
<dbReference type="RefSeq" id="WP_012549166.1">
    <property type="nucleotide sequence ID" value="NC_011312.1"/>
</dbReference>
<dbReference type="SMR" id="B6EPU2"/>
<dbReference type="KEGG" id="vsa:VSAL_I0337"/>
<dbReference type="eggNOG" id="COG0098">
    <property type="taxonomic scope" value="Bacteria"/>
</dbReference>
<dbReference type="HOGENOM" id="CLU_065898_2_2_6"/>
<dbReference type="Proteomes" id="UP000001730">
    <property type="component" value="Chromosome 1"/>
</dbReference>
<dbReference type="GO" id="GO:0015935">
    <property type="term" value="C:small ribosomal subunit"/>
    <property type="evidence" value="ECO:0007669"/>
    <property type="project" value="InterPro"/>
</dbReference>
<dbReference type="GO" id="GO:0019843">
    <property type="term" value="F:rRNA binding"/>
    <property type="evidence" value="ECO:0007669"/>
    <property type="project" value="UniProtKB-UniRule"/>
</dbReference>
<dbReference type="GO" id="GO:0003735">
    <property type="term" value="F:structural constituent of ribosome"/>
    <property type="evidence" value="ECO:0007669"/>
    <property type="project" value="InterPro"/>
</dbReference>
<dbReference type="GO" id="GO:0006412">
    <property type="term" value="P:translation"/>
    <property type="evidence" value="ECO:0007669"/>
    <property type="project" value="UniProtKB-UniRule"/>
</dbReference>
<dbReference type="FunFam" id="3.30.160.20:FF:000001">
    <property type="entry name" value="30S ribosomal protein S5"/>
    <property type="match status" value="1"/>
</dbReference>
<dbReference type="FunFam" id="3.30.230.10:FF:000002">
    <property type="entry name" value="30S ribosomal protein S5"/>
    <property type="match status" value="1"/>
</dbReference>
<dbReference type="Gene3D" id="3.30.160.20">
    <property type="match status" value="1"/>
</dbReference>
<dbReference type="Gene3D" id="3.30.230.10">
    <property type="match status" value="1"/>
</dbReference>
<dbReference type="HAMAP" id="MF_01307_B">
    <property type="entry name" value="Ribosomal_uS5_B"/>
    <property type="match status" value="1"/>
</dbReference>
<dbReference type="InterPro" id="IPR020568">
    <property type="entry name" value="Ribosomal_Su5_D2-typ_SF"/>
</dbReference>
<dbReference type="InterPro" id="IPR000851">
    <property type="entry name" value="Ribosomal_uS5"/>
</dbReference>
<dbReference type="InterPro" id="IPR005712">
    <property type="entry name" value="Ribosomal_uS5_bac-type"/>
</dbReference>
<dbReference type="InterPro" id="IPR005324">
    <property type="entry name" value="Ribosomal_uS5_C"/>
</dbReference>
<dbReference type="InterPro" id="IPR013810">
    <property type="entry name" value="Ribosomal_uS5_N"/>
</dbReference>
<dbReference type="InterPro" id="IPR018192">
    <property type="entry name" value="Ribosomal_uS5_N_CS"/>
</dbReference>
<dbReference type="InterPro" id="IPR014721">
    <property type="entry name" value="Ribsml_uS5_D2-typ_fold_subgr"/>
</dbReference>
<dbReference type="NCBIfam" id="TIGR01021">
    <property type="entry name" value="rpsE_bact"/>
    <property type="match status" value="1"/>
</dbReference>
<dbReference type="PANTHER" id="PTHR48277">
    <property type="entry name" value="MITOCHONDRIAL RIBOSOMAL PROTEIN S5"/>
    <property type="match status" value="1"/>
</dbReference>
<dbReference type="PANTHER" id="PTHR48277:SF1">
    <property type="entry name" value="MITOCHONDRIAL RIBOSOMAL PROTEIN S5"/>
    <property type="match status" value="1"/>
</dbReference>
<dbReference type="Pfam" id="PF00333">
    <property type="entry name" value="Ribosomal_S5"/>
    <property type="match status" value="1"/>
</dbReference>
<dbReference type="Pfam" id="PF03719">
    <property type="entry name" value="Ribosomal_S5_C"/>
    <property type="match status" value="1"/>
</dbReference>
<dbReference type="SUPFAM" id="SSF54768">
    <property type="entry name" value="dsRNA-binding domain-like"/>
    <property type="match status" value="1"/>
</dbReference>
<dbReference type="SUPFAM" id="SSF54211">
    <property type="entry name" value="Ribosomal protein S5 domain 2-like"/>
    <property type="match status" value="1"/>
</dbReference>
<dbReference type="PROSITE" id="PS00585">
    <property type="entry name" value="RIBOSOMAL_S5"/>
    <property type="match status" value="1"/>
</dbReference>
<dbReference type="PROSITE" id="PS50881">
    <property type="entry name" value="S5_DSRBD"/>
    <property type="match status" value="1"/>
</dbReference>
<gene>
    <name evidence="1" type="primary">rpsE</name>
    <name type="ordered locus">VSAL_I0337</name>
</gene>
<name>RS5_ALISL</name>
<feature type="chain" id="PRO_1000140833" description="Small ribosomal subunit protein uS5">
    <location>
        <begin position="1"/>
        <end position="166"/>
    </location>
</feature>
<feature type="domain" description="S5 DRBM" evidence="1">
    <location>
        <begin position="11"/>
        <end position="74"/>
    </location>
</feature>
<keyword id="KW-0687">Ribonucleoprotein</keyword>
<keyword id="KW-0689">Ribosomal protein</keyword>
<keyword id="KW-0694">RNA-binding</keyword>
<keyword id="KW-0699">rRNA-binding</keyword>
<comment type="function">
    <text evidence="1">With S4 and S12 plays an important role in translational accuracy.</text>
</comment>
<comment type="function">
    <text evidence="1">Located at the back of the 30S subunit body where it stabilizes the conformation of the head with respect to the body.</text>
</comment>
<comment type="subunit">
    <text evidence="1">Part of the 30S ribosomal subunit. Contacts proteins S4 and S8.</text>
</comment>
<comment type="domain">
    <text>The N-terminal domain interacts with the head of the 30S subunit; the C-terminal domain interacts with the body and contacts protein S4. The interaction surface between S4 and S5 is involved in control of translational fidelity.</text>
</comment>
<comment type="similarity">
    <text evidence="1">Belongs to the universal ribosomal protein uS5 family.</text>
</comment>
<reference key="1">
    <citation type="journal article" date="2008" name="BMC Genomics">
        <title>The genome sequence of the fish pathogen Aliivibrio salmonicida strain LFI1238 shows extensive evidence of gene decay.</title>
        <authorList>
            <person name="Hjerde E."/>
            <person name="Lorentzen M.S."/>
            <person name="Holden M.T."/>
            <person name="Seeger K."/>
            <person name="Paulsen S."/>
            <person name="Bason N."/>
            <person name="Churcher C."/>
            <person name="Harris D."/>
            <person name="Norbertczak H."/>
            <person name="Quail M.A."/>
            <person name="Sanders S."/>
            <person name="Thurston S."/>
            <person name="Parkhill J."/>
            <person name="Willassen N.P."/>
            <person name="Thomson N.R."/>
        </authorList>
    </citation>
    <scope>NUCLEOTIDE SEQUENCE [LARGE SCALE GENOMIC DNA]</scope>
    <source>
        <strain>LFI1238</strain>
    </source>
</reference>